<name>FUSA3_GIBZE</name>
<dbReference type="EC" id="2.6.-.-" evidence="6"/>
<dbReference type="EMBL" id="HG970333">
    <property type="protein sequence ID" value="CEF76485.1"/>
    <property type="molecule type" value="Genomic_DNA"/>
</dbReference>
<dbReference type="SMR" id="A0A098DDI1"/>
<dbReference type="STRING" id="229533.A0A098DDI1"/>
<dbReference type="VEuPathDB" id="FungiDB:FGRAMPH1_01G09365"/>
<dbReference type="InParanoid" id="A0A098DDI1"/>
<dbReference type="Proteomes" id="UP000070720">
    <property type="component" value="Chromosome 2"/>
</dbReference>
<dbReference type="GO" id="GO:0005829">
    <property type="term" value="C:cytosol"/>
    <property type="evidence" value="ECO:0007669"/>
    <property type="project" value="TreeGrafter"/>
</dbReference>
<dbReference type="GO" id="GO:0030170">
    <property type="term" value="F:pyridoxal phosphate binding"/>
    <property type="evidence" value="ECO:0007669"/>
    <property type="project" value="InterPro"/>
</dbReference>
<dbReference type="GO" id="GO:0008483">
    <property type="term" value="F:transaminase activity"/>
    <property type="evidence" value="ECO:0007669"/>
    <property type="project" value="UniProtKB-KW"/>
</dbReference>
<dbReference type="CDD" id="cd00610">
    <property type="entry name" value="OAT_like"/>
    <property type="match status" value="1"/>
</dbReference>
<dbReference type="FunFam" id="3.40.640.10:FF:000004">
    <property type="entry name" value="Acetylornithine aminotransferase"/>
    <property type="match status" value="1"/>
</dbReference>
<dbReference type="Gene3D" id="3.90.1150.10">
    <property type="entry name" value="Aspartate Aminotransferase, domain 1"/>
    <property type="match status" value="1"/>
</dbReference>
<dbReference type="Gene3D" id="3.40.640.10">
    <property type="entry name" value="Type I PLP-dependent aspartate aminotransferase-like (Major domain)"/>
    <property type="match status" value="1"/>
</dbReference>
<dbReference type="InterPro" id="IPR005814">
    <property type="entry name" value="Aminotrans_3"/>
</dbReference>
<dbReference type="InterPro" id="IPR015424">
    <property type="entry name" value="PyrdxlP-dep_Trfase"/>
</dbReference>
<dbReference type="InterPro" id="IPR015421">
    <property type="entry name" value="PyrdxlP-dep_Trfase_major"/>
</dbReference>
<dbReference type="InterPro" id="IPR015422">
    <property type="entry name" value="PyrdxlP-dep_Trfase_small"/>
</dbReference>
<dbReference type="NCBIfam" id="NF005685">
    <property type="entry name" value="PRK07483.1"/>
    <property type="match status" value="1"/>
</dbReference>
<dbReference type="PANTHER" id="PTHR43094">
    <property type="entry name" value="AMINOTRANSFERASE"/>
    <property type="match status" value="1"/>
</dbReference>
<dbReference type="PANTHER" id="PTHR43094:SF1">
    <property type="entry name" value="AMINOTRANSFERASE CLASS-III"/>
    <property type="match status" value="1"/>
</dbReference>
<dbReference type="Pfam" id="PF00202">
    <property type="entry name" value="Aminotran_3"/>
    <property type="match status" value="1"/>
</dbReference>
<dbReference type="SUPFAM" id="SSF53383">
    <property type="entry name" value="PLP-dependent transferases"/>
    <property type="match status" value="1"/>
</dbReference>
<feature type="chain" id="PRO_0000445376" description="Aminotransferase FGSG_17085">
    <location>
        <begin position="1"/>
        <end position="511"/>
    </location>
</feature>
<feature type="binding site" evidence="2">
    <location>
        <begin position="165"/>
        <end position="166"/>
    </location>
    <ligand>
        <name>pyridoxal 5'-phosphate</name>
        <dbReference type="ChEBI" id="CHEBI:597326"/>
    </ligand>
</feature>
<feature type="binding site" evidence="2">
    <location>
        <position position="200"/>
    </location>
    <ligand>
        <name>substrate</name>
    </ligand>
</feature>
<feature type="binding site" evidence="1">
    <location>
        <position position="310"/>
    </location>
    <ligand>
        <name>pyridoxal 5'-phosphate</name>
        <dbReference type="ChEBI" id="CHEBI:597326"/>
    </ligand>
</feature>
<feature type="binding site" evidence="2">
    <location>
        <position position="371"/>
    </location>
    <ligand>
        <name>substrate</name>
    </ligand>
</feature>
<feature type="binding site" evidence="2">
    <location>
        <begin position="372"/>
        <end position="373"/>
    </location>
    <ligand>
        <name>pyridoxal 5'-phosphate</name>
        <dbReference type="ChEBI" id="CHEBI:597326"/>
    </ligand>
</feature>
<feature type="modified residue" description="N6-(pyridoxal phosphate)lysine" evidence="2">
    <location>
        <position position="339"/>
    </location>
</feature>
<organism>
    <name type="scientific">Gibberella zeae (strain ATCC MYA-4620 / CBS 123657 / FGSC 9075 / NRRL 31084 / PH-1)</name>
    <name type="common">Wheat head blight fungus</name>
    <name type="synonym">Fusarium graminearum</name>
    <dbReference type="NCBI Taxonomy" id="229533"/>
    <lineage>
        <taxon>Eukaryota</taxon>
        <taxon>Fungi</taxon>
        <taxon>Dikarya</taxon>
        <taxon>Ascomycota</taxon>
        <taxon>Pezizomycotina</taxon>
        <taxon>Sordariomycetes</taxon>
        <taxon>Hypocreomycetidae</taxon>
        <taxon>Hypocreales</taxon>
        <taxon>Nectriaceae</taxon>
        <taxon>Fusarium</taxon>
    </lineage>
</organism>
<comment type="function">
    <text evidence="3 6">Aminotransferase; part of the gene cluster that mediates the biosynthesis of the lipopeptide fusaristatin A (PubMed:25412204). Fusaristatin A consists of a polyketide chain linked to three amino acid residues glutamine (Gln), dehydroalanine (dehydro-Ala), and beta-aminoisobutyric acid (PubMed:25412204). The biosynthesis starts with formation of a linear polyketide chain by the highly reducing polyketide synthase PKS6 (PubMed:25412204). The gene cluster does not contain an acyl-CoA ligase or an acyl-transferase, and it is therefore predicted that the polyketide is transferred directly to the nonribosomal peptide synthetase NRPS7 (Probable). Modules 1-3 from NRPS7 incorporate dehydro-Ala, Gln, and beta-aminoisobutyric acid in the compound, which is released by cyclization (PubMed:25412204). The beta-aminoisobutyric acid units are most likely not freely available to the NRPS, but can be synthesized from thymine, which requires a dehydrogenase, a monooxygenase, and an aminotransferase. The fusaristatin A cluster contains a cytochrome P450 monooxygenase (FGSG_08207) and an aminotransferase (FGSG_17085), which theoretically can perform two of the enzymatic steps (Probable). The enzymes may however also be involved in biosynthesis of dehydroalanine or modification of the polyketide (Probable). The dehydro-Ala residue can be a result of cyclization, where serine is dehydrated (Probable). The last gene of the cluster encodes a protein with an A/B barrel domain found in variable enzymes, which hampers functional prediction (Probable).</text>
</comment>
<comment type="cofactor">
    <cofactor evidence="2">
        <name>pyridoxal 5'-phosphate</name>
        <dbReference type="ChEBI" id="CHEBI:597326"/>
    </cofactor>
</comment>
<comment type="pathway">
    <text evidence="6">Secondary metabolite biosynthesis.</text>
</comment>
<comment type="similarity">
    <text evidence="5">Belongs to the class-III pyridoxal-phosphate-dependent aminotransferase family.</text>
</comment>
<protein>
    <recommendedName>
        <fullName evidence="4">Aminotransferase FGSG_17085</fullName>
        <ecNumber evidence="6">2.6.-.-</ecNumber>
    </recommendedName>
    <alternativeName>
        <fullName evidence="4">Fusaristatin A biosynthesis cluster protein FGSG_17085</fullName>
    </alternativeName>
</protein>
<sequence length="511" mass="55628">MFATQSPRHLQVLLCRTKKFALASPPICYKVGAASSGSIRKFLSARFSTSARARNLKQSVLDNSGRHGVYLYPTLKPEPLNVVSAKDTTVVFSNGKTIEDTTCGAAVACLGYNNERVKNAMIKQMDSFCYSNSLFYGHEIGEELAAELIGGTNGEMAKVYLMCSGAEAMESAMKMARQYYMELNPRQPQRTNFIAREGSYHGSTLGALSMGGHVGRRKLFEGMLLDNNIHRVSAANEYRGKADGQTTEEYVQQLADELDRKFQEVGPETVAAFVAETLVGATLGTIPAPTGYFKAMKKVCDKYGALLILDEVMCGMGRCGSLHEWEQEGVVPDIQTVAKGLAGGFAPMAAMFINHRLSDALMSGSGVFSHGHTYQGHPVGCAAALEVQRIIREDNLVENVRKNGEYLGKLLHDQLDDHPNVGNIRGRGFFWSMEFVADKETKEPFLPSDGIAKKVHLTALNDVGISLYPGMGTKDGVAGDHAWIGPAYNCSKQDIERIVSKVKEAVVLALG</sequence>
<evidence type="ECO:0000250" key="1">
    <source>
        <dbReference type="UniProtKB" id="P12995"/>
    </source>
</evidence>
<evidence type="ECO:0000250" key="2">
    <source>
        <dbReference type="UniProtKB" id="P53555"/>
    </source>
</evidence>
<evidence type="ECO:0000269" key="3">
    <source>
    </source>
</evidence>
<evidence type="ECO:0000303" key="4">
    <source>
    </source>
</evidence>
<evidence type="ECO:0000305" key="5"/>
<evidence type="ECO:0000305" key="6">
    <source>
    </source>
</evidence>
<reference key="1">
    <citation type="journal article" date="2007" name="Science">
        <title>The Fusarium graminearum genome reveals a link between localized polymorphism and pathogen specialization.</title>
        <authorList>
            <person name="Cuomo C.A."/>
            <person name="Gueldener U."/>
            <person name="Xu J.-R."/>
            <person name="Trail F."/>
            <person name="Turgeon B.G."/>
            <person name="Di Pietro A."/>
            <person name="Walton J.D."/>
            <person name="Ma L.-J."/>
            <person name="Baker S.E."/>
            <person name="Rep M."/>
            <person name="Adam G."/>
            <person name="Antoniw J."/>
            <person name="Baldwin T."/>
            <person name="Calvo S.E."/>
            <person name="Chang Y.-L."/>
            <person name="DeCaprio D."/>
            <person name="Gale L.R."/>
            <person name="Gnerre S."/>
            <person name="Goswami R.S."/>
            <person name="Hammond-Kosack K."/>
            <person name="Harris L.J."/>
            <person name="Hilburn K."/>
            <person name="Kennell J.C."/>
            <person name="Kroken S."/>
            <person name="Magnuson J.K."/>
            <person name="Mannhaupt G."/>
            <person name="Mauceli E.W."/>
            <person name="Mewes H.-W."/>
            <person name="Mitterbauer R."/>
            <person name="Muehlbauer G."/>
            <person name="Muensterkoetter M."/>
            <person name="Nelson D."/>
            <person name="O'Donnell K."/>
            <person name="Ouellet T."/>
            <person name="Qi W."/>
            <person name="Quesneville H."/>
            <person name="Roncero M.I.G."/>
            <person name="Seong K.-Y."/>
            <person name="Tetko I.V."/>
            <person name="Urban M."/>
            <person name="Waalwijk C."/>
            <person name="Ward T.J."/>
            <person name="Yao J."/>
            <person name="Birren B.W."/>
            <person name="Kistler H.C."/>
        </authorList>
    </citation>
    <scope>NUCLEOTIDE SEQUENCE [LARGE SCALE GENOMIC DNA]</scope>
    <source>
        <strain>ATCC MYA-4620 / CBS 123657 / FGSC 9075 / NRRL 31084 / PH-1</strain>
    </source>
</reference>
<reference key="2">
    <citation type="journal article" date="2010" name="Nature">
        <title>Comparative genomics reveals mobile pathogenicity chromosomes in Fusarium.</title>
        <authorList>
            <person name="Ma L.-J."/>
            <person name="van der Does H.C."/>
            <person name="Borkovich K.A."/>
            <person name="Coleman J.J."/>
            <person name="Daboussi M.-J."/>
            <person name="Di Pietro A."/>
            <person name="Dufresne M."/>
            <person name="Freitag M."/>
            <person name="Grabherr M."/>
            <person name="Henrissat B."/>
            <person name="Houterman P.M."/>
            <person name="Kang S."/>
            <person name="Shim W.-B."/>
            <person name="Woloshuk C."/>
            <person name="Xie X."/>
            <person name="Xu J.-R."/>
            <person name="Antoniw J."/>
            <person name="Baker S.E."/>
            <person name="Bluhm B.H."/>
            <person name="Breakspear A."/>
            <person name="Brown D.W."/>
            <person name="Butchko R.A.E."/>
            <person name="Chapman S."/>
            <person name="Coulson R."/>
            <person name="Coutinho P.M."/>
            <person name="Danchin E.G.J."/>
            <person name="Diener A."/>
            <person name="Gale L.R."/>
            <person name="Gardiner D.M."/>
            <person name="Goff S."/>
            <person name="Hammond-Kosack K.E."/>
            <person name="Hilburn K."/>
            <person name="Hua-Van A."/>
            <person name="Jonkers W."/>
            <person name="Kazan K."/>
            <person name="Kodira C.D."/>
            <person name="Koehrsen M."/>
            <person name="Kumar L."/>
            <person name="Lee Y.-H."/>
            <person name="Li L."/>
            <person name="Manners J.M."/>
            <person name="Miranda-Saavedra D."/>
            <person name="Mukherjee M."/>
            <person name="Park G."/>
            <person name="Park J."/>
            <person name="Park S.-Y."/>
            <person name="Proctor R.H."/>
            <person name="Regev A."/>
            <person name="Ruiz-Roldan M.C."/>
            <person name="Sain D."/>
            <person name="Sakthikumar S."/>
            <person name="Sykes S."/>
            <person name="Schwartz D.C."/>
            <person name="Turgeon B.G."/>
            <person name="Wapinski I."/>
            <person name="Yoder O."/>
            <person name="Young S."/>
            <person name="Zeng Q."/>
            <person name="Zhou S."/>
            <person name="Galagan J."/>
            <person name="Cuomo C.A."/>
            <person name="Kistler H.C."/>
            <person name="Rep M."/>
        </authorList>
    </citation>
    <scope>GENOME REANNOTATION</scope>
    <source>
        <strain>ATCC MYA-4620 / CBS 123657 / FGSC 9075 / NRRL 31084 / PH-1</strain>
    </source>
</reference>
<reference key="3">
    <citation type="journal article" date="2015" name="BMC Genomics">
        <title>The completed genome sequence of the pathogenic ascomycete fungus Fusarium graminearum.</title>
        <authorList>
            <person name="King R."/>
            <person name="Urban M."/>
            <person name="Hammond-Kosack M.C.U."/>
            <person name="Hassani-Pak K."/>
            <person name="Hammond-Kosack K.E."/>
        </authorList>
    </citation>
    <scope>NUCLEOTIDE SEQUENCE [LARGE SCALE GENOMIC DNA]</scope>
    <source>
        <strain>ATCC MYA-4620 / CBS 123657 / FGSC 9075 / NRRL 31084 / PH-1</strain>
    </source>
</reference>
<reference key="4">
    <citation type="journal article" date="2014" name="J. Nat. Prod.">
        <title>Identification of the biosynthetic gene clusters for the lipopeptides fusaristatin A and W493 B in Fusarium graminearum and F. pseudograminearum.</title>
        <authorList>
            <person name="Soerensen J.L."/>
            <person name="Sondergaard T.E."/>
            <person name="Covarelli L."/>
            <person name="Fuertes P.R."/>
            <person name="Hansen F.T."/>
            <person name="Frandsen R.J."/>
            <person name="Saei W."/>
            <person name="Lukassen M.B."/>
            <person name="Wimmer R."/>
            <person name="Nielsen K.F."/>
            <person name="Gardiner D.M."/>
            <person name="Giese H."/>
        </authorList>
    </citation>
    <scope>IDENTIFICATION</scope>
    <scope>FUNCTION</scope>
    <scope>PATHWAY</scope>
</reference>
<keyword id="KW-0032">Aminotransferase</keyword>
<keyword id="KW-0663">Pyridoxal phosphate</keyword>
<keyword id="KW-1185">Reference proteome</keyword>
<keyword id="KW-0808">Transferase</keyword>
<accession>A0A098DDI1</accession>
<accession>A0A0E0RZ10</accession>
<proteinExistence type="inferred from homology"/>
<gene>
    <name type="ORF">FGRAMPH1_01T09365</name>
    <name type="ORF">FGSG_0820</name>
    <name evidence="4" type="ORF">FGSG_17085</name>
</gene>